<sequence>MIVLGLETSCDETGLALYDSELGLRGQVLYSQIKLHAEYGGVVPELASRDHVRKLIPLMNQLLEQSGVKKQEIDAVAYTRGPGLMGALMTGALFGRTLAFSLNKPAIGVHHMEGHMLAPLLSSQPPEFPFVALLVSGGHTQLMVVHGIGQYELLGESIDDAAGEAFDKVAKMMNLPYPGGPNIAKLALSGDPLAFEFPRPMLHQGLDFSFSGLKTAVSVQLKKLNGENRDADIAASFQEAIVDTLVKKSVKALKQTGLKRLVIAGGVSANLRLREQLETSLARIKAQVYYAEPALCTDNGAMIAFAGYQRLKAGQHDGLAVTTTPRWPMTELTIPE</sequence>
<name>TSAD_ACIBS</name>
<organism>
    <name type="scientific">Acinetobacter baumannii (strain SDF)</name>
    <dbReference type="NCBI Taxonomy" id="509170"/>
    <lineage>
        <taxon>Bacteria</taxon>
        <taxon>Pseudomonadati</taxon>
        <taxon>Pseudomonadota</taxon>
        <taxon>Gammaproteobacteria</taxon>
        <taxon>Moraxellales</taxon>
        <taxon>Moraxellaceae</taxon>
        <taxon>Acinetobacter</taxon>
        <taxon>Acinetobacter calcoaceticus/baumannii complex</taxon>
    </lineage>
</organism>
<reference key="1">
    <citation type="journal article" date="2008" name="PLoS ONE">
        <title>Comparative analysis of Acinetobacters: three genomes for three lifestyles.</title>
        <authorList>
            <person name="Vallenet D."/>
            <person name="Nordmann P."/>
            <person name="Barbe V."/>
            <person name="Poirel L."/>
            <person name="Mangenot S."/>
            <person name="Bataille E."/>
            <person name="Dossat C."/>
            <person name="Gas S."/>
            <person name="Kreimeyer A."/>
            <person name="Lenoble P."/>
            <person name="Oztas S."/>
            <person name="Poulain J."/>
            <person name="Segurens B."/>
            <person name="Robert C."/>
            <person name="Abergel C."/>
            <person name="Claverie J.-M."/>
            <person name="Raoult D."/>
            <person name="Medigue C."/>
            <person name="Weissenbach J."/>
            <person name="Cruveiller S."/>
        </authorList>
    </citation>
    <scope>NUCLEOTIDE SEQUENCE [LARGE SCALE GENOMIC DNA]</scope>
    <source>
        <strain>SDF</strain>
    </source>
</reference>
<comment type="function">
    <text evidence="1">Required for the formation of a threonylcarbamoyl group on adenosine at position 37 (t(6)A37) in tRNAs that read codons beginning with adenine. Is involved in the transfer of the threonylcarbamoyl moiety of threonylcarbamoyl-AMP (TC-AMP) to the N6 group of A37, together with TsaE and TsaB. TsaD likely plays a direct catalytic role in this reaction.</text>
</comment>
<comment type="catalytic activity">
    <reaction evidence="1">
        <text>L-threonylcarbamoyladenylate + adenosine(37) in tRNA = N(6)-L-threonylcarbamoyladenosine(37) in tRNA + AMP + H(+)</text>
        <dbReference type="Rhea" id="RHEA:37059"/>
        <dbReference type="Rhea" id="RHEA-COMP:10162"/>
        <dbReference type="Rhea" id="RHEA-COMP:10163"/>
        <dbReference type="ChEBI" id="CHEBI:15378"/>
        <dbReference type="ChEBI" id="CHEBI:73682"/>
        <dbReference type="ChEBI" id="CHEBI:74411"/>
        <dbReference type="ChEBI" id="CHEBI:74418"/>
        <dbReference type="ChEBI" id="CHEBI:456215"/>
        <dbReference type="EC" id="2.3.1.234"/>
    </reaction>
</comment>
<comment type="cofactor">
    <cofactor evidence="1">
        <name>Fe(2+)</name>
        <dbReference type="ChEBI" id="CHEBI:29033"/>
    </cofactor>
    <text evidence="1">Binds 1 Fe(2+) ion per subunit.</text>
</comment>
<comment type="subcellular location">
    <subcellularLocation>
        <location evidence="1">Cytoplasm</location>
    </subcellularLocation>
</comment>
<comment type="similarity">
    <text evidence="1">Belongs to the KAE1 / TsaD family.</text>
</comment>
<dbReference type="EC" id="2.3.1.234" evidence="1"/>
<dbReference type="EMBL" id="CU468230">
    <property type="protein sequence ID" value="CAP00630.1"/>
    <property type="molecule type" value="Genomic_DNA"/>
</dbReference>
<dbReference type="SMR" id="B0VKC7"/>
<dbReference type="KEGG" id="abm:ABSDF1284"/>
<dbReference type="HOGENOM" id="CLU_023208_0_0_6"/>
<dbReference type="Proteomes" id="UP000001741">
    <property type="component" value="Chromosome"/>
</dbReference>
<dbReference type="GO" id="GO:0005737">
    <property type="term" value="C:cytoplasm"/>
    <property type="evidence" value="ECO:0007669"/>
    <property type="project" value="UniProtKB-SubCell"/>
</dbReference>
<dbReference type="GO" id="GO:0005506">
    <property type="term" value="F:iron ion binding"/>
    <property type="evidence" value="ECO:0007669"/>
    <property type="project" value="UniProtKB-UniRule"/>
</dbReference>
<dbReference type="GO" id="GO:0061711">
    <property type="term" value="F:N(6)-L-threonylcarbamoyladenine synthase activity"/>
    <property type="evidence" value="ECO:0007669"/>
    <property type="project" value="UniProtKB-EC"/>
</dbReference>
<dbReference type="GO" id="GO:0002949">
    <property type="term" value="P:tRNA threonylcarbamoyladenosine modification"/>
    <property type="evidence" value="ECO:0007669"/>
    <property type="project" value="UniProtKB-UniRule"/>
</dbReference>
<dbReference type="CDD" id="cd24133">
    <property type="entry name" value="ASKHA_NBD_TsaD_bac"/>
    <property type="match status" value="1"/>
</dbReference>
<dbReference type="FunFam" id="3.30.420.40:FF:000012">
    <property type="entry name" value="tRNA N6-adenosine threonylcarbamoyltransferase"/>
    <property type="match status" value="1"/>
</dbReference>
<dbReference type="FunFam" id="3.30.420.40:FF:000040">
    <property type="entry name" value="tRNA N6-adenosine threonylcarbamoyltransferase"/>
    <property type="match status" value="1"/>
</dbReference>
<dbReference type="Gene3D" id="3.30.420.40">
    <property type="match status" value="2"/>
</dbReference>
<dbReference type="HAMAP" id="MF_01445">
    <property type="entry name" value="TsaD"/>
    <property type="match status" value="1"/>
</dbReference>
<dbReference type="InterPro" id="IPR043129">
    <property type="entry name" value="ATPase_NBD"/>
</dbReference>
<dbReference type="InterPro" id="IPR000905">
    <property type="entry name" value="Gcp-like_dom"/>
</dbReference>
<dbReference type="InterPro" id="IPR017861">
    <property type="entry name" value="KAE1/TsaD"/>
</dbReference>
<dbReference type="InterPro" id="IPR017860">
    <property type="entry name" value="Peptidase_M22_CS"/>
</dbReference>
<dbReference type="InterPro" id="IPR022450">
    <property type="entry name" value="TsaD"/>
</dbReference>
<dbReference type="NCBIfam" id="TIGR00329">
    <property type="entry name" value="gcp_kae1"/>
    <property type="match status" value="1"/>
</dbReference>
<dbReference type="NCBIfam" id="TIGR03723">
    <property type="entry name" value="T6A_TsaD_YgjD"/>
    <property type="match status" value="1"/>
</dbReference>
<dbReference type="PANTHER" id="PTHR11735">
    <property type="entry name" value="TRNA N6-ADENOSINE THREONYLCARBAMOYLTRANSFERASE"/>
    <property type="match status" value="1"/>
</dbReference>
<dbReference type="PANTHER" id="PTHR11735:SF6">
    <property type="entry name" value="TRNA N6-ADENOSINE THREONYLCARBAMOYLTRANSFERASE, MITOCHONDRIAL"/>
    <property type="match status" value="1"/>
</dbReference>
<dbReference type="Pfam" id="PF00814">
    <property type="entry name" value="TsaD"/>
    <property type="match status" value="1"/>
</dbReference>
<dbReference type="PRINTS" id="PR00789">
    <property type="entry name" value="OSIALOPTASE"/>
</dbReference>
<dbReference type="SUPFAM" id="SSF53067">
    <property type="entry name" value="Actin-like ATPase domain"/>
    <property type="match status" value="2"/>
</dbReference>
<dbReference type="PROSITE" id="PS01016">
    <property type="entry name" value="GLYCOPROTEASE"/>
    <property type="match status" value="1"/>
</dbReference>
<keyword id="KW-0012">Acyltransferase</keyword>
<keyword id="KW-0963">Cytoplasm</keyword>
<keyword id="KW-0408">Iron</keyword>
<keyword id="KW-0479">Metal-binding</keyword>
<keyword id="KW-0808">Transferase</keyword>
<keyword id="KW-0819">tRNA processing</keyword>
<accession>B0VKC7</accession>
<gene>
    <name evidence="1" type="primary">tsaD</name>
    <name type="synonym">gcp</name>
    <name type="ordered locus">ABSDF1284</name>
</gene>
<proteinExistence type="inferred from homology"/>
<evidence type="ECO:0000255" key="1">
    <source>
        <dbReference type="HAMAP-Rule" id="MF_01445"/>
    </source>
</evidence>
<protein>
    <recommendedName>
        <fullName evidence="1">tRNA N6-adenosine threonylcarbamoyltransferase</fullName>
        <ecNumber evidence="1">2.3.1.234</ecNumber>
    </recommendedName>
    <alternativeName>
        <fullName evidence="1">N6-L-threonylcarbamoyladenine synthase</fullName>
        <shortName evidence="1">t(6)A synthase</shortName>
    </alternativeName>
    <alternativeName>
        <fullName evidence="1">t(6)A37 threonylcarbamoyladenosine biosynthesis protein TsaD</fullName>
    </alternativeName>
    <alternativeName>
        <fullName evidence="1">tRNA threonylcarbamoyladenosine biosynthesis protein TsaD</fullName>
    </alternativeName>
</protein>
<feature type="chain" id="PRO_1000145941" description="tRNA N6-adenosine threonylcarbamoyltransferase">
    <location>
        <begin position="1"/>
        <end position="336"/>
    </location>
</feature>
<feature type="binding site" evidence="1">
    <location>
        <position position="111"/>
    </location>
    <ligand>
        <name>Fe cation</name>
        <dbReference type="ChEBI" id="CHEBI:24875"/>
    </ligand>
</feature>
<feature type="binding site" evidence="1">
    <location>
        <position position="115"/>
    </location>
    <ligand>
        <name>Fe cation</name>
        <dbReference type="ChEBI" id="CHEBI:24875"/>
    </ligand>
</feature>
<feature type="binding site" evidence="1">
    <location>
        <begin position="134"/>
        <end position="138"/>
    </location>
    <ligand>
        <name>substrate</name>
    </ligand>
</feature>
<feature type="binding site" evidence="1">
    <location>
        <position position="167"/>
    </location>
    <ligand>
        <name>substrate</name>
    </ligand>
</feature>
<feature type="binding site" evidence="1">
    <location>
        <position position="180"/>
    </location>
    <ligand>
        <name>substrate</name>
    </ligand>
</feature>
<feature type="binding site" evidence="1">
    <location>
        <position position="270"/>
    </location>
    <ligand>
        <name>substrate</name>
    </ligand>
</feature>
<feature type="binding site" evidence="1">
    <location>
        <position position="298"/>
    </location>
    <ligand>
        <name>Fe cation</name>
        <dbReference type="ChEBI" id="CHEBI:24875"/>
    </ligand>
</feature>